<dbReference type="EC" id="6.1.1.3" evidence="1"/>
<dbReference type="EMBL" id="CP000472">
    <property type="protein sequence ID" value="ACJ29205.1"/>
    <property type="molecule type" value="Genomic_DNA"/>
</dbReference>
<dbReference type="RefSeq" id="WP_020912564.1">
    <property type="nucleotide sequence ID" value="NC_011566.1"/>
</dbReference>
<dbReference type="SMR" id="B8CME8"/>
<dbReference type="STRING" id="225849.swp_2462"/>
<dbReference type="KEGG" id="swp:swp_2462"/>
<dbReference type="eggNOG" id="COG0441">
    <property type="taxonomic scope" value="Bacteria"/>
</dbReference>
<dbReference type="HOGENOM" id="CLU_008554_0_1_6"/>
<dbReference type="OrthoDB" id="9802304at2"/>
<dbReference type="Proteomes" id="UP000000753">
    <property type="component" value="Chromosome"/>
</dbReference>
<dbReference type="GO" id="GO:0005829">
    <property type="term" value="C:cytosol"/>
    <property type="evidence" value="ECO:0007669"/>
    <property type="project" value="TreeGrafter"/>
</dbReference>
<dbReference type="GO" id="GO:0005524">
    <property type="term" value="F:ATP binding"/>
    <property type="evidence" value="ECO:0007669"/>
    <property type="project" value="UniProtKB-UniRule"/>
</dbReference>
<dbReference type="GO" id="GO:0046872">
    <property type="term" value="F:metal ion binding"/>
    <property type="evidence" value="ECO:0007669"/>
    <property type="project" value="UniProtKB-KW"/>
</dbReference>
<dbReference type="GO" id="GO:0004829">
    <property type="term" value="F:threonine-tRNA ligase activity"/>
    <property type="evidence" value="ECO:0007669"/>
    <property type="project" value="UniProtKB-UniRule"/>
</dbReference>
<dbReference type="GO" id="GO:0000049">
    <property type="term" value="F:tRNA binding"/>
    <property type="evidence" value="ECO:0007669"/>
    <property type="project" value="UniProtKB-KW"/>
</dbReference>
<dbReference type="GO" id="GO:0006435">
    <property type="term" value="P:threonyl-tRNA aminoacylation"/>
    <property type="evidence" value="ECO:0007669"/>
    <property type="project" value="UniProtKB-UniRule"/>
</dbReference>
<dbReference type="CDD" id="cd01667">
    <property type="entry name" value="TGS_ThrRS"/>
    <property type="match status" value="1"/>
</dbReference>
<dbReference type="CDD" id="cd00860">
    <property type="entry name" value="ThrRS_anticodon"/>
    <property type="match status" value="1"/>
</dbReference>
<dbReference type="CDD" id="cd00771">
    <property type="entry name" value="ThrRS_core"/>
    <property type="match status" value="1"/>
</dbReference>
<dbReference type="FunFam" id="3.10.20.30:FF:000005">
    <property type="entry name" value="Threonine--tRNA ligase"/>
    <property type="match status" value="1"/>
</dbReference>
<dbReference type="FunFam" id="3.30.54.20:FF:000002">
    <property type="entry name" value="Threonine--tRNA ligase"/>
    <property type="match status" value="1"/>
</dbReference>
<dbReference type="FunFam" id="3.30.930.10:FF:000002">
    <property type="entry name" value="Threonine--tRNA ligase"/>
    <property type="match status" value="1"/>
</dbReference>
<dbReference type="FunFam" id="3.40.50.800:FF:000001">
    <property type="entry name" value="Threonine--tRNA ligase"/>
    <property type="match status" value="1"/>
</dbReference>
<dbReference type="FunFam" id="3.30.980.10:FF:000005">
    <property type="entry name" value="Threonyl-tRNA synthetase, mitochondrial"/>
    <property type="match status" value="1"/>
</dbReference>
<dbReference type="Gene3D" id="3.10.20.30">
    <property type="match status" value="1"/>
</dbReference>
<dbReference type="Gene3D" id="3.30.54.20">
    <property type="match status" value="1"/>
</dbReference>
<dbReference type="Gene3D" id="3.40.50.800">
    <property type="entry name" value="Anticodon-binding domain"/>
    <property type="match status" value="1"/>
</dbReference>
<dbReference type="Gene3D" id="3.30.930.10">
    <property type="entry name" value="Bira Bifunctional Protein, Domain 2"/>
    <property type="match status" value="1"/>
</dbReference>
<dbReference type="Gene3D" id="3.30.980.10">
    <property type="entry name" value="Threonyl-trna Synthetase, Chain A, domain 2"/>
    <property type="match status" value="1"/>
</dbReference>
<dbReference type="HAMAP" id="MF_00184">
    <property type="entry name" value="Thr_tRNA_synth"/>
    <property type="match status" value="1"/>
</dbReference>
<dbReference type="InterPro" id="IPR002314">
    <property type="entry name" value="aa-tRNA-synt_IIb"/>
</dbReference>
<dbReference type="InterPro" id="IPR006195">
    <property type="entry name" value="aa-tRNA-synth_II"/>
</dbReference>
<dbReference type="InterPro" id="IPR045864">
    <property type="entry name" value="aa-tRNA-synth_II/BPL/LPL"/>
</dbReference>
<dbReference type="InterPro" id="IPR004154">
    <property type="entry name" value="Anticodon-bd"/>
</dbReference>
<dbReference type="InterPro" id="IPR036621">
    <property type="entry name" value="Anticodon-bd_dom_sf"/>
</dbReference>
<dbReference type="InterPro" id="IPR012675">
    <property type="entry name" value="Beta-grasp_dom_sf"/>
</dbReference>
<dbReference type="InterPro" id="IPR004095">
    <property type="entry name" value="TGS"/>
</dbReference>
<dbReference type="InterPro" id="IPR012676">
    <property type="entry name" value="TGS-like"/>
</dbReference>
<dbReference type="InterPro" id="IPR002320">
    <property type="entry name" value="Thr-tRNA-ligase_IIa"/>
</dbReference>
<dbReference type="InterPro" id="IPR018163">
    <property type="entry name" value="Thr/Ala-tRNA-synth_IIc_edit"/>
</dbReference>
<dbReference type="InterPro" id="IPR047246">
    <property type="entry name" value="ThrRS_anticodon"/>
</dbReference>
<dbReference type="InterPro" id="IPR033728">
    <property type="entry name" value="ThrRS_core"/>
</dbReference>
<dbReference type="InterPro" id="IPR012947">
    <property type="entry name" value="tRNA_SAD"/>
</dbReference>
<dbReference type="NCBIfam" id="TIGR00418">
    <property type="entry name" value="thrS"/>
    <property type="match status" value="1"/>
</dbReference>
<dbReference type="PANTHER" id="PTHR11451:SF44">
    <property type="entry name" value="THREONINE--TRNA LIGASE, CHLOROPLASTIC_MITOCHONDRIAL 2"/>
    <property type="match status" value="1"/>
</dbReference>
<dbReference type="PANTHER" id="PTHR11451">
    <property type="entry name" value="THREONINE-TRNA LIGASE"/>
    <property type="match status" value="1"/>
</dbReference>
<dbReference type="Pfam" id="PF03129">
    <property type="entry name" value="HGTP_anticodon"/>
    <property type="match status" value="1"/>
</dbReference>
<dbReference type="Pfam" id="PF02824">
    <property type="entry name" value="TGS"/>
    <property type="match status" value="1"/>
</dbReference>
<dbReference type="Pfam" id="PF00587">
    <property type="entry name" value="tRNA-synt_2b"/>
    <property type="match status" value="1"/>
</dbReference>
<dbReference type="Pfam" id="PF07973">
    <property type="entry name" value="tRNA_SAD"/>
    <property type="match status" value="1"/>
</dbReference>
<dbReference type="PRINTS" id="PR01047">
    <property type="entry name" value="TRNASYNTHTHR"/>
</dbReference>
<dbReference type="SMART" id="SM00863">
    <property type="entry name" value="tRNA_SAD"/>
    <property type="match status" value="1"/>
</dbReference>
<dbReference type="SUPFAM" id="SSF52954">
    <property type="entry name" value="Class II aaRS ABD-related"/>
    <property type="match status" value="1"/>
</dbReference>
<dbReference type="SUPFAM" id="SSF55681">
    <property type="entry name" value="Class II aaRS and biotin synthetases"/>
    <property type="match status" value="1"/>
</dbReference>
<dbReference type="SUPFAM" id="SSF81271">
    <property type="entry name" value="TGS-like"/>
    <property type="match status" value="1"/>
</dbReference>
<dbReference type="SUPFAM" id="SSF55186">
    <property type="entry name" value="ThrRS/AlaRS common domain"/>
    <property type="match status" value="1"/>
</dbReference>
<dbReference type="PROSITE" id="PS50862">
    <property type="entry name" value="AA_TRNA_LIGASE_II"/>
    <property type="match status" value="1"/>
</dbReference>
<dbReference type="PROSITE" id="PS51880">
    <property type="entry name" value="TGS"/>
    <property type="match status" value="1"/>
</dbReference>
<protein>
    <recommendedName>
        <fullName evidence="1">Threonine--tRNA ligase</fullName>
        <ecNumber evidence="1">6.1.1.3</ecNumber>
    </recommendedName>
    <alternativeName>
        <fullName evidence="1">Threonyl-tRNA synthetase</fullName>
        <shortName evidence="1">ThrRS</shortName>
    </alternativeName>
</protein>
<reference key="1">
    <citation type="journal article" date="2008" name="PLoS ONE">
        <title>Environmental adaptation: genomic analysis of the piezotolerant and psychrotolerant deep-sea iron reducing bacterium Shewanella piezotolerans WP3.</title>
        <authorList>
            <person name="Wang F."/>
            <person name="Wang J."/>
            <person name="Jian H."/>
            <person name="Zhang B."/>
            <person name="Li S."/>
            <person name="Wang F."/>
            <person name="Zeng X."/>
            <person name="Gao L."/>
            <person name="Bartlett D.H."/>
            <person name="Yu J."/>
            <person name="Hu S."/>
            <person name="Xiao X."/>
        </authorList>
    </citation>
    <scope>NUCLEOTIDE SEQUENCE [LARGE SCALE GENOMIC DNA]</scope>
    <source>
        <strain>WP3 / JCM 13877</strain>
    </source>
</reference>
<gene>
    <name evidence="1" type="primary">thrS</name>
    <name type="ordered locus">swp_2462</name>
</gene>
<sequence length="642" mass="73544">MPVITLPDGSKREFAQPVSTLDVAADIGPGLAKACIAGRVNGELKDACDIIDTDSELSIITAKDEEGVEILRHSCAHLLGHAFKQLWPEAKMAIGPVIDNGFYYDIDLDHKLTQEDIDALQKRMTQLAKTNYAVDKRVVSWQEARDTFEARGESYKIEILDENISKDATPALYHHEEYVDMCRGPHVPNMKFCQNFKLMSVAGAYWRGNSDNKMLQRIYGTAWADKKALKVHLNRLEEAAKRDHRKIGKQLDLYHMQEEAPGMVFWHNDGWSLFLELEKFIRQKLGQYTYQEVKGPLMMDRVLWERSGHWDKYADGMFTTNSESREYAIKPMNCPGHVQIFNQGLKSYRDLPLRMAEFGCCHRNEPSGSLHGLMRVRGFTQDDAHVFCTEEQVQQEVSACIQMVYDTYETFGFKNIVVKLSTRPEKRIGDDDMWDRAEEALKQALKSNDIEFEILPGEGAFYGPKIEFTLHDCLDRAWQCGTVQLDYALPGRLGATYVAEDNSRQTPVMIHRAILGSLERFLGILIEEYAGKFPTWLAPQQVVVMNITDKQSDYAEEVVNLFKEHGIRATKDLRNEKIGFKIREHTLRRVPYLLVVGDQEMENKEVAVRTREGVDLGKMQIQEFATKLKNQISLRSLNLLED</sequence>
<keyword id="KW-0030">Aminoacyl-tRNA synthetase</keyword>
<keyword id="KW-0067">ATP-binding</keyword>
<keyword id="KW-0963">Cytoplasm</keyword>
<keyword id="KW-0436">Ligase</keyword>
<keyword id="KW-0479">Metal-binding</keyword>
<keyword id="KW-0547">Nucleotide-binding</keyword>
<keyword id="KW-0648">Protein biosynthesis</keyword>
<keyword id="KW-0694">RNA-binding</keyword>
<keyword id="KW-0820">tRNA-binding</keyword>
<keyword id="KW-0862">Zinc</keyword>
<proteinExistence type="inferred from homology"/>
<name>SYT_SHEPW</name>
<accession>B8CME8</accession>
<organism>
    <name type="scientific">Shewanella piezotolerans (strain WP3 / JCM 13877)</name>
    <dbReference type="NCBI Taxonomy" id="225849"/>
    <lineage>
        <taxon>Bacteria</taxon>
        <taxon>Pseudomonadati</taxon>
        <taxon>Pseudomonadota</taxon>
        <taxon>Gammaproteobacteria</taxon>
        <taxon>Alteromonadales</taxon>
        <taxon>Shewanellaceae</taxon>
        <taxon>Shewanella</taxon>
    </lineage>
</organism>
<comment type="function">
    <text evidence="1">Catalyzes the attachment of threonine to tRNA(Thr) in a two-step reaction: L-threonine is first activated by ATP to form Thr-AMP and then transferred to the acceptor end of tRNA(Thr). Also edits incorrectly charged L-seryl-tRNA(Thr).</text>
</comment>
<comment type="catalytic activity">
    <reaction evidence="1">
        <text>tRNA(Thr) + L-threonine + ATP = L-threonyl-tRNA(Thr) + AMP + diphosphate + H(+)</text>
        <dbReference type="Rhea" id="RHEA:24624"/>
        <dbReference type="Rhea" id="RHEA-COMP:9670"/>
        <dbReference type="Rhea" id="RHEA-COMP:9704"/>
        <dbReference type="ChEBI" id="CHEBI:15378"/>
        <dbReference type="ChEBI" id="CHEBI:30616"/>
        <dbReference type="ChEBI" id="CHEBI:33019"/>
        <dbReference type="ChEBI" id="CHEBI:57926"/>
        <dbReference type="ChEBI" id="CHEBI:78442"/>
        <dbReference type="ChEBI" id="CHEBI:78534"/>
        <dbReference type="ChEBI" id="CHEBI:456215"/>
        <dbReference type="EC" id="6.1.1.3"/>
    </reaction>
</comment>
<comment type="cofactor">
    <cofactor evidence="1">
        <name>Zn(2+)</name>
        <dbReference type="ChEBI" id="CHEBI:29105"/>
    </cofactor>
    <text evidence="1">Binds 1 zinc ion per subunit.</text>
</comment>
<comment type="subunit">
    <text evidence="1">Homodimer.</text>
</comment>
<comment type="subcellular location">
    <subcellularLocation>
        <location evidence="1">Cytoplasm</location>
    </subcellularLocation>
</comment>
<comment type="similarity">
    <text evidence="1">Belongs to the class-II aminoacyl-tRNA synthetase family.</text>
</comment>
<feature type="chain" id="PRO_1000199567" description="Threonine--tRNA ligase">
    <location>
        <begin position="1"/>
        <end position="642"/>
    </location>
</feature>
<feature type="domain" description="TGS" evidence="2">
    <location>
        <begin position="1"/>
        <end position="61"/>
    </location>
</feature>
<feature type="region of interest" description="Catalytic" evidence="1">
    <location>
        <begin position="243"/>
        <end position="534"/>
    </location>
</feature>
<feature type="binding site" evidence="1">
    <location>
        <position position="334"/>
    </location>
    <ligand>
        <name>Zn(2+)</name>
        <dbReference type="ChEBI" id="CHEBI:29105"/>
    </ligand>
</feature>
<feature type="binding site" evidence="1">
    <location>
        <position position="385"/>
    </location>
    <ligand>
        <name>Zn(2+)</name>
        <dbReference type="ChEBI" id="CHEBI:29105"/>
    </ligand>
</feature>
<feature type="binding site" evidence="1">
    <location>
        <position position="511"/>
    </location>
    <ligand>
        <name>Zn(2+)</name>
        <dbReference type="ChEBI" id="CHEBI:29105"/>
    </ligand>
</feature>
<evidence type="ECO:0000255" key="1">
    <source>
        <dbReference type="HAMAP-Rule" id="MF_00184"/>
    </source>
</evidence>
<evidence type="ECO:0000255" key="2">
    <source>
        <dbReference type="PROSITE-ProRule" id="PRU01228"/>
    </source>
</evidence>